<comment type="function">
    <text evidence="2 7 8 9 10 11">Required for correct functioning of the GINS complex, a complex that plays an essential role in the initiation of DNA replication, and progression of DNA replication forks (PubMed:17417653, PubMed:28414293). GINS complex is a core component of CDC45-MCM-GINS (CMG) helicase, the molecular machine that unwinds template DNA during replication, and around which the replisome is built (PubMed:32453425, PubMed:34694004, PubMed:34700328, PubMed:35585232).</text>
</comment>
<comment type="subunit">
    <text evidence="3 4 6 7 8 9 10">Component of the GINS complex which is a heterotetramer of GINS1, GINS2, GINS3 and GINS4 (PubMed:17545466, PubMed:17557111, PubMed:17652513, PubMed:28414293). Forms a stable subcomplex with GINS4. GINS complex interacts with DNA primase in vitro (PubMed:17545466, PubMed:17557111, PubMed:17652513, PubMed:28414293). Component of the CMG helicase complex, a hexameric ring of related MCM2-7 subunits stabilized by CDC45 and the tetrameric GINS complex (PubMed:32453425, PubMed:34694004, PubMed:34700328).</text>
</comment>
<comment type="interaction">
    <interactant intactId="EBI-9019496">
        <id>Q14691</id>
    </interactant>
    <interactant intactId="EBI-32724208">
        <id>Q9NYP3</id>
        <label>DONSON</label>
    </interactant>
    <organismsDiffer>false</organismsDiffer>
    <experiments>7</experiments>
</comment>
<comment type="interaction">
    <interactant intactId="EBI-9019496">
        <id>Q14691</id>
    </interactant>
    <interactant intactId="EBI-747500">
        <id>Q9BRT9</id>
        <label>GINS4</label>
    </interactant>
    <organismsDiffer>false</organismsDiffer>
    <experiments>8</experiments>
</comment>
<comment type="subcellular location">
    <subcellularLocation>
        <location evidence="13">Nucleus</location>
    </subcellularLocation>
    <subcellularLocation>
        <location evidence="13">Chromosome</location>
    </subcellularLocation>
    <text evidence="13">Associates with chromatin.</text>
</comment>
<comment type="induction">
    <text evidence="5">Significantly up-regulated in aggressive melanomas.</text>
</comment>
<comment type="mass spectrometry">
    <text>This is the measured mass for the GINS complex.</text>
</comment>
<comment type="disease" evidence="7">
    <disease id="DI-05177">
        <name>Immunodeficiency 55</name>
        <acronym>IMD55</acronym>
        <description>An autosomal recessive primary immunodeficiency characterized by chronic neutropenia, natural killer cell deficiency, recurrent viral and bacterial infections, and intrauterine growth retardation. Postnatal growth retardation is present in most patients.</description>
        <dbReference type="MIM" id="617827"/>
    </disease>
    <text>The disease is caused by variants affecting the gene represented in this entry.</text>
</comment>
<comment type="similarity">
    <text evidence="12">Belongs to the GINS1/PSF1 family.</text>
</comment>
<comment type="sequence caution" evidence="12">
    <conflict type="erroneous initiation">
        <sequence resource="EMBL-CDS" id="BAA11503"/>
    </conflict>
    <text>Extended N-terminus.</text>
</comment>
<sequence>MFCEKAMELIRELHRAPEGQLPAFNEDGLRQVLEEMKALYEQNQSDVNEAKSGGRSDLIPTIKFRHCSLLRNRRCTVAYLYDRLLRIRALRWEYGSVLPNALRFHMAAEEMEWFNNYKRSLATYMRSLGGDEGLDITQDMKPPKSLYIEVRCLKDYGEFEVDDGTSVLLKKNSQHFLPRWKCEQLIRQGVLEHILS</sequence>
<name>PSF1_HUMAN</name>
<organism>
    <name type="scientific">Homo sapiens</name>
    <name type="common">Human</name>
    <dbReference type="NCBI Taxonomy" id="9606"/>
    <lineage>
        <taxon>Eukaryota</taxon>
        <taxon>Metazoa</taxon>
        <taxon>Chordata</taxon>
        <taxon>Craniata</taxon>
        <taxon>Vertebrata</taxon>
        <taxon>Euteleostomi</taxon>
        <taxon>Mammalia</taxon>
        <taxon>Eutheria</taxon>
        <taxon>Euarchontoglires</taxon>
        <taxon>Primates</taxon>
        <taxon>Haplorrhini</taxon>
        <taxon>Catarrhini</taxon>
        <taxon>Hominidae</taxon>
        <taxon>Homo</taxon>
    </lineage>
</organism>
<feature type="chain" id="PRO_0000219035" description="DNA replication complex GINS protein PSF1">
    <location>
        <begin position="1"/>
        <end position="196"/>
    </location>
</feature>
<feature type="sequence variant" id="VAR_080619" description="In IMD55; lower GINS1 protein levels and defective DNA replication are observed in patient cells; the mutant does not interact with GINS3 and GINS4; dbSNP:rs137901350." evidence="7">
    <original>R</original>
    <variation>C</variation>
    <location>
        <position position="83"/>
    </location>
</feature>
<feature type="sequence variant" id="VAR_051606" description="In dbSNP:rs6076347." evidence="1">
    <original>V</original>
    <variation>I</variation>
    <location>
        <position position="97"/>
    </location>
</feature>
<feature type="sequence variant" id="VAR_080620" description="In IMD55; lower GINS1 protein levels and defective DNA replication are observed in patient cells; dbSNP:rs376610445." evidence="7">
    <original>C</original>
    <variation>Y</variation>
    <location>
        <position position="152"/>
    </location>
</feature>
<feature type="helix" evidence="19">
    <location>
        <begin position="4"/>
        <end position="15"/>
    </location>
</feature>
<feature type="strand" evidence="20">
    <location>
        <begin position="16"/>
        <end position="19"/>
    </location>
</feature>
<feature type="helix" evidence="19">
    <location>
        <begin position="26"/>
        <end position="49"/>
    </location>
</feature>
<feature type="helix" evidence="19">
    <location>
        <begin position="56"/>
        <end position="58"/>
    </location>
</feature>
<feature type="helix" evidence="19">
    <location>
        <begin position="59"/>
        <end position="94"/>
    </location>
</feature>
<feature type="helix" evidence="19">
    <location>
        <begin position="100"/>
        <end position="104"/>
    </location>
</feature>
<feature type="helix" evidence="19">
    <location>
        <begin position="108"/>
        <end position="127"/>
    </location>
</feature>
<feature type="strand" evidence="19">
    <location>
        <begin position="128"/>
        <end position="132"/>
    </location>
</feature>
<keyword id="KW-0002">3D-structure</keyword>
<keyword id="KW-0158">Chromosome</keyword>
<keyword id="KW-0225">Disease variant</keyword>
<keyword id="KW-0235">DNA replication</keyword>
<keyword id="KW-0539">Nucleus</keyword>
<keyword id="KW-1267">Proteomics identification</keyword>
<keyword id="KW-1185">Reference proteome</keyword>
<dbReference type="EMBL" id="D80008">
    <property type="protein sequence ID" value="BAA11503.2"/>
    <property type="status" value="ALT_INIT"/>
    <property type="molecule type" value="mRNA"/>
</dbReference>
<dbReference type="EMBL" id="AL353812">
    <property type="status" value="NOT_ANNOTATED_CDS"/>
    <property type="molecule type" value="Genomic_DNA"/>
</dbReference>
<dbReference type="EMBL" id="AL031672">
    <property type="status" value="NOT_ANNOTATED_CDS"/>
    <property type="molecule type" value="Genomic_DNA"/>
</dbReference>
<dbReference type="EMBL" id="BC012542">
    <property type="protein sequence ID" value="AAH12542.1"/>
    <property type="molecule type" value="mRNA"/>
</dbReference>
<dbReference type="CCDS" id="CCDS33451.1"/>
<dbReference type="RefSeq" id="NP_066545.3">
    <property type="nucleotide sequence ID" value="NM_021067.4"/>
</dbReference>
<dbReference type="PDB" id="2E9X">
    <property type="method" value="X-ray"/>
    <property type="resolution" value="2.30 A"/>
    <property type="chains" value="A/E=1-149"/>
</dbReference>
<dbReference type="PDB" id="2EHO">
    <property type="method" value="X-ray"/>
    <property type="resolution" value="3.00 A"/>
    <property type="chains" value="B/F/J=1-151"/>
</dbReference>
<dbReference type="PDB" id="2Q9Q">
    <property type="method" value="X-ray"/>
    <property type="resolution" value="2.36 A"/>
    <property type="chains" value="C/G=1-196"/>
</dbReference>
<dbReference type="PDB" id="6XTX">
    <property type="method" value="EM"/>
    <property type="resolution" value="3.29 A"/>
    <property type="chains" value="A=1-196"/>
</dbReference>
<dbReference type="PDB" id="6XTY">
    <property type="method" value="EM"/>
    <property type="resolution" value="6.77 A"/>
    <property type="chains" value="A=1-196"/>
</dbReference>
<dbReference type="PDB" id="7PFO">
    <property type="method" value="EM"/>
    <property type="resolution" value="3.20 A"/>
    <property type="chains" value="D=1-196"/>
</dbReference>
<dbReference type="PDB" id="7PLO">
    <property type="method" value="EM"/>
    <property type="resolution" value="2.80 A"/>
    <property type="chains" value="D=1-196"/>
</dbReference>
<dbReference type="PDB" id="8B9D">
    <property type="method" value="EM"/>
    <property type="resolution" value="3.40 A"/>
    <property type="chains" value="D=1-196"/>
</dbReference>
<dbReference type="PDB" id="8OK2">
    <property type="method" value="EM"/>
    <property type="resolution" value="4.10 A"/>
    <property type="chains" value="A=1-151"/>
</dbReference>
<dbReference type="PDBsum" id="2E9X"/>
<dbReference type="PDBsum" id="2EHO"/>
<dbReference type="PDBsum" id="2Q9Q"/>
<dbReference type="PDBsum" id="6XTX"/>
<dbReference type="PDBsum" id="6XTY"/>
<dbReference type="PDBsum" id="7PFO"/>
<dbReference type="PDBsum" id="7PLO"/>
<dbReference type="PDBsum" id="8B9D"/>
<dbReference type="PDBsum" id="8OK2"/>
<dbReference type="EMDB" id="EMD-10619"/>
<dbReference type="EMDB" id="EMD-10621"/>
<dbReference type="EMDB" id="EMD-13375"/>
<dbReference type="EMDB" id="EMD-13494"/>
<dbReference type="EMDB" id="EMD-16916"/>
<dbReference type="SMR" id="Q14691"/>
<dbReference type="BioGRID" id="115174">
    <property type="interactions" value="36"/>
</dbReference>
<dbReference type="ComplexPortal" id="CPX-787">
    <property type="entry name" value="GINS complex"/>
</dbReference>
<dbReference type="CORUM" id="Q14691"/>
<dbReference type="DIP" id="DIP-29331N"/>
<dbReference type="FunCoup" id="Q14691">
    <property type="interactions" value="2358"/>
</dbReference>
<dbReference type="IntAct" id="Q14691">
    <property type="interactions" value="23"/>
</dbReference>
<dbReference type="MINT" id="Q14691"/>
<dbReference type="STRING" id="9606.ENSP00000262460"/>
<dbReference type="GlyGen" id="Q14691">
    <property type="glycosylation" value="1 site, 1 O-linked glycan (1 site)"/>
</dbReference>
<dbReference type="iPTMnet" id="Q14691"/>
<dbReference type="PhosphoSitePlus" id="Q14691"/>
<dbReference type="BioMuta" id="GINS1"/>
<dbReference type="DMDM" id="6226339"/>
<dbReference type="jPOST" id="Q14691"/>
<dbReference type="MassIVE" id="Q14691"/>
<dbReference type="PaxDb" id="9606-ENSP00000262460"/>
<dbReference type="PeptideAtlas" id="Q14691"/>
<dbReference type="ProteomicsDB" id="60129"/>
<dbReference type="Pumba" id="Q14691"/>
<dbReference type="Antibodypedia" id="10061">
    <property type="antibodies" value="190 antibodies from 27 providers"/>
</dbReference>
<dbReference type="DNASU" id="9837"/>
<dbReference type="Ensembl" id="ENST00000262460.5">
    <property type="protein sequence ID" value="ENSP00000262460.4"/>
    <property type="gene ID" value="ENSG00000101003.12"/>
</dbReference>
<dbReference type="Ensembl" id="ENST00000696874.1">
    <property type="protein sequence ID" value="ENSP00000512943.1"/>
    <property type="gene ID" value="ENSG00000101003.12"/>
</dbReference>
<dbReference type="GeneID" id="9837"/>
<dbReference type="KEGG" id="hsa:9837"/>
<dbReference type="MANE-Select" id="ENST00000262460.5">
    <property type="protein sequence ID" value="ENSP00000262460.4"/>
    <property type="RefSeq nucleotide sequence ID" value="NM_021067.5"/>
    <property type="RefSeq protein sequence ID" value="NP_066545.3"/>
</dbReference>
<dbReference type="UCSC" id="uc002wuv.2">
    <property type="organism name" value="human"/>
</dbReference>
<dbReference type="AGR" id="HGNC:28980"/>
<dbReference type="CTD" id="9837"/>
<dbReference type="DisGeNET" id="9837"/>
<dbReference type="GeneCards" id="GINS1"/>
<dbReference type="HGNC" id="HGNC:28980">
    <property type="gene designation" value="GINS1"/>
</dbReference>
<dbReference type="HPA" id="ENSG00000101003">
    <property type="expression patterns" value="Tissue enhanced (lymphoid tissue, testis)"/>
</dbReference>
<dbReference type="MalaCards" id="GINS1"/>
<dbReference type="MIM" id="610608">
    <property type="type" value="gene"/>
</dbReference>
<dbReference type="MIM" id="617827">
    <property type="type" value="phenotype"/>
</dbReference>
<dbReference type="neXtProt" id="NX_Q14691"/>
<dbReference type="OpenTargets" id="ENSG00000101003"/>
<dbReference type="Orphanet" id="505227">
    <property type="disease" value="Combined immunodeficiency due to GINS1 deficiency"/>
</dbReference>
<dbReference type="PharmGKB" id="PA145008291"/>
<dbReference type="VEuPathDB" id="HostDB:ENSG00000101003"/>
<dbReference type="eggNOG" id="KOG3303">
    <property type="taxonomic scope" value="Eukaryota"/>
</dbReference>
<dbReference type="GeneTree" id="ENSGT00390000013968"/>
<dbReference type="HOGENOM" id="CLU_079191_1_1_1"/>
<dbReference type="InParanoid" id="Q14691"/>
<dbReference type="OMA" id="MFCEKAT"/>
<dbReference type="OrthoDB" id="10252587at2759"/>
<dbReference type="PAN-GO" id="Q14691">
    <property type="GO annotations" value="2 GO annotations based on evolutionary models"/>
</dbReference>
<dbReference type="PhylomeDB" id="Q14691"/>
<dbReference type="TreeFam" id="TF312848"/>
<dbReference type="PathwayCommons" id="Q14691"/>
<dbReference type="Reactome" id="R-HSA-176974">
    <property type="pathway name" value="Unwinding of DNA"/>
</dbReference>
<dbReference type="SignaLink" id="Q14691"/>
<dbReference type="SIGNOR" id="Q14691"/>
<dbReference type="BioGRID-ORCS" id="9837">
    <property type="hits" value="826 hits in 1175 CRISPR screens"/>
</dbReference>
<dbReference type="ChiTaRS" id="GINS1">
    <property type="organism name" value="human"/>
</dbReference>
<dbReference type="EvolutionaryTrace" id="Q14691"/>
<dbReference type="GeneWiki" id="GINS1"/>
<dbReference type="GenomeRNAi" id="9837"/>
<dbReference type="Pharos" id="Q14691">
    <property type="development level" value="Tbio"/>
</dbReference>
<dbReference type="PRO" id="PR:Q14691"/>
<dbReference type="Proteomes" id="UP000005640">
    <property type="component" value="Chromosome 20"/>
</dbReference>
<dbReference type="RNAct" id="Q14691">
    <property type="molecule type" value="protein"/>
</dbReference>
<dbReference type="Bgee" id="ENSG00000101003">
    <property type="expression patterns" value="Expressed in oocyte and 157 other cell types or tissues"/>
</dbReference>
<dbReference type="GO" id="GO:0071162">
    <property type="term" value="C:CMG complex"/>
    <property type="evidence" value="ECO:0000353"/>
    <property type="project" value="ComplexPortal"/>
</dbReference>
<dbReference type="GO" id="GO:0005737">
    <property type="term" value="C:cytoplasm"/>
    <property type="evidence" value="ECO:0000314"/>
    <property type="project" value="UniProtKB"/>
</dbReference>
<dbReference type="GO" id="GO:0000811">
    <property type="term" value="C:GINS complex"/>
    <property type="evidence" value="ECO:0000353"/>
    <property type="project" value="ComplexPortal"/>
</dbReference>
<dbReference type="GO" id="GO:0005654">
    <property type="term" value="C:nucleoplasm"/>
    <property type="evidence" value="ECO:0000304"/>
    <property type="project" value="Reactome"/>
</dbReference>
<dbReference type="GO" id="GO:0005634">
    <property type="term" value="C:nucleus"/>
    <property type="evidence" value="ECO:0000314"/>
    <property type="project" value="UniProtKB"/>
</dbReference>
<dbReference type="GO" id="GO:1902983">
    <property type="term" value="P:DNA strand elongation involved in mitotic DNA replication"/>
    <property type="evidence" value="ECO:0000318"/>
    <property type="project" value="GO_Central"/>
</dbReference>
<dbReference type="GO" id="GO:0001833">
    <property type="term" value="P:inner cell mass cell proliferation"/>
    <property type="evidence" value="ECO:0007669"/>
    <property type="project" value="Ensembl"/>
</dbReference>
<dbReference type="CDD" id="cd11710">
    <property type="entry name" value="GINS_A_psf1"/>
    <property type="match status" value="1"/>
</dbReference>
<dbReference type="CDD" id="cd21696">
    <property type="entry name" value="GINS_B_Psf1"/>
    <property type="match status" value="1"/>
</dbReference>
<dbReference type="FunFam" id="1.20.58.1030:FF:000001">
    <property type="entry name" value="DNA replication complex GINS protein PSF1"/>
    <property type="match status" value="1"/>
</dbReference>
<dbReference type="Gene3D" id="1.20.58.1030">
    <property type="match status" value="1"/>
</dbReference>
<dbReference type="InterPro" id="IPR021151">
    <property type="entry name" value="GINS_A"/>
</dbReference>
<dbReference type="InterPro" id="IPR036224">
    <property type="entry name" value="GINS_bundle-like_dom_sf"/>
</dbReference>
<dbReference type="InterPro" id="IPR005339">
    <property type="entry name" value="GINS_Psf1"/>
</dbReference>
<dbReference type="InterPro" id="IPR056783">
    <property type="entry name" value="PSF1_C"/>
</dbReference>
<dbReference type="PANTHER" id="PTHR12914:SF2">
    <property type="entry name" value="DNA REPLICATION COMPLEX GINS PROTEIN PSF1"/>
    <property type="match status" value="1"/>
</dbReference>
<dbReference type="PANTHER" id="PTHR12914">
    <property type="entry name" value="PARTNER OF SLD5"/>
    <property type="match status" value="1"/>
</dbReference>
<dbReference type="Pfam" id="PF24997">
    <property type="entry name" value="PSF1_C"/>
    <property type="match status" value="1"/>
</dbReference>
<dbReference type="Pfam" id="PF05916">
    <property type="entry name" value="Sld5"/>
    <property type="match status" value="1"/>
</dbReference>
<dbReference type="SUPFAM" id="SSF158573">
    <property type="entry name" value="GINS helical bundle-like"/>
    <property type="match status" value="1"/>
</dbReference>
<proteinExistence type="evidence at protein level"/>
<reference key="1">
    <citation type="journal article" date="1996" name="DNA Res.">
        <title>Prediction of the coding sequences of unidentified human genes. V. The coding sequences of 40 new genes (KIAA0161-KIAA0200) deduced by analysis of cDNA clones from human cell line KG-1.</title>
        <authorList>
            <person name="Nagase T."/>
            <person name="Seki N."/>
            <person name="Ishikawa K."/>
            <person name="Tanaka A."/>
            <person name="Nomura N."/>
        </authorList>
    </citation>
    <scope>NUCLEOTIDE SEQUENCE [LARGE SCALE MRNA]</scope>
    <source>
        <tissue>Bone marrow</tissue>
    </source>
</reference>
<reference key="2">
    <citation type="journal article" date="2001" name="Nature">
        <title>The DNA sequence and comparative analysis of human chromosome 20.</title>
        <authorList>
            <person name="Deloukas P."/>
            <person name="Matthews L.H."/>
            <person name="Ashurst J.L."/>
            <person name="Burton J."/>
            <person name="Gilbert J.G.R."/>
            <person name="Jones M."/>
            <person name="Stavrides G."/>
            <person name="Almeida J.P."/>
            <person name="Babbage A.K."/>
            <person name="Bagguley C.L."/>
            <person name="Bailey J."/>
            <person name="Barlow K.F."/>
            <person name="Bates K.N."/>
            <person name="Beard L.M."/>
            <person name="Beare D.M."/>
            <person name="Beasley O.P."/>
            <person name="Bird C.P."/>
            <person name="Blakey S.E."/>
            <person name="Bridgeman A.M."/>
            <person name="Brown A.J."/>
            <person name="Buck D."/>
            <person name="Burrill W.D."/>
            <person name="Butler A.P."/>
            <person name="Carder C."/>
            <person name="Carter N.P."/>
            <person name="Chapman J.C."/>
            <person name="Clamp M."/>
            <person name="Clark G."/>
            <person name="Clark L.N."/>
            <person name="Clark S.Y."/>
            <person name="Clee C.M."/>
            <person name="Clegg S."/>
            <person name="Cobley V.E."/>
            <person name="Collier R.E."/>
            <person name="Connor R.E."/>
            <person name="Corby N.R."/>
            <person name="Coulson A."/>
            <person name="Coville G.J."/>
            <person name="Deadman R."/>
            <person name="Dhami P.D."/>
            <person name="Dunn M."/>
            <person name="Ellington A.G."/>
            <person name="Frankland J.A."/>
            <person name="Fraser A."/>
            <person name="French L."/>
            <person name="Garner P."/>
            <person name="Grafham D.V."/>
            <person name="Griffiths C."/>
            <person name="Griffiths M.N.D."/>
            <person name="Gwilliam R."/>
            <person name="Hall R.E."/>
            <person name="Hammond S."/>
            <person name="Harley J.L."/>
            <person name="Heath P.D."/>
            <person name="Ho S."/>
            <person name="Holden J.L."/>
            <person name="Howden P.J."/>
            <person name="Huckle E."/>
            <person name="Hunt A.R."/>
            <person name="Hunt S.E."/>
            <person name="Jekosch K."/>
            <person name="Johnson C.M."/>
            <person name="Johnson D."/>
            <person name="Kay M.P."/>
            <person name="Kimberley A.M."/>
            <person name="King A."/>
            <person name="Knights A."/>
            <person name="Laird G.K."/>
            <person name="Lawlor S."/>
            <person name="Lehvaeslaiho M.H."/>
            <person name="Leversha M.A."/>
            <person name="Lloyd C."/>
            <person name="Lloyd D.M."/>
            <person name="Lovell J.D."/>
            <person name="Marsh V.L."/>
            <person name="Martin S.L."/>
            <person name="McConnachie L.J."/>
            <person name="McLay K."/>
            <person name="McMurray A.A."/>
            <person name="Milne S.A."/>
            <person name="Mistry D."/>
            <person name="Moore M.J.F."/>
            <person name="Mullikin J.C."/>
            <person name="Nickerson T."/>
            <person name="Oliver K."/>
            <person name="Parker A."/>
            <person name="Patel R."/>
            <person name="Pearce T.A.V."/>
            <person name="Peck A.I."/>
            <person name="Phillimore B.J.C.T."/>
            <person name="Prathalingam S.R."/>
            <person name="Plumb R.W."/>
            <person name="Ramsay H."/>
            <person name="Rice C.M."/>
            <person name="Ross M.T."/>
            <person name="Scott C.E."/>
            <person name="Sehra H.K."/>
            <person name="Shownkeen R."/>
            <person name="Sims S."/>
            <person name="Skuce C.D."/>
            <person name="Smith M.L."/>
            <person name="Soderlund C."/>
            <person name="Steward C.A."/>
            <person name="Sulston J.E."/>
            <person name="Swann R.M."/>
            <person name="Sycamore N."/>
            <person name="Taylor R."/>
            <person name="Tee L."/>
            <person name="Thomas D.W."/>
            <person name="Thorpe A."/>
            <person name="Tracey A."/>
            <person name="Tromans A.C."/>
            <person name="Vaudin M."/>
            <person name="Wall M."/>
            <person name="Wallis J.M."/>
            <person name="Whitehead S.L."/>
            <person name="Whittaker P."/>
            <person name="Willey D.L."/>
            <person name="Williams L."/>
            <person name="Williams S.A."/>
            <person name="Wilming L."/>
            <person name="Wray P.W."/>
            <person name="Hubbard T."/>
            <person name="Durbin R.M."/>
            <person name="Bentley D.R."/>
            <person name="Beck S."/>
            <person name="Rogers J."/>
        </authorList>
    </citation>
    <scope>NUCLEOTIDE SEQUENCE [LARGE SCALE GENOMIC DNA]</scope>
</reference>
<reference key="3">
    <citation type="journal article" date="2004" name="Genome Res.">
        <title>The status, quality, and expansion of the NIH full-length cDNA project: the Mammalian Gene Collection (MGC).</title>
        <authorList>
            <consortium name="The MGC Project Team"/>
        </authorList>
    </citation>
    <scope>NUCLEOTIDE SEQUENCE [LARGE SCALE MRNA]</scope>
    <scope>VARIANT ILE-97</scope>
    <source>
        <tissue>Skin</tissue>
    </source>
</reference>
<reference key="4">
    <citation type="journal article" date="2007" name="PLoS ONE">
        <title>Comprehensive expression profiling of tumor cell lines identifies molecular signatures of melanoma progression.</title>
        <authorList>
            <person name="Ryu B."/>
            <person name="Kim D.S."/>
            <person name="Deluca A.M."/>
            <person name="Alani R.M."/>
        </authorList>
    </citation>
    <scope>INDUCTION</scope>
</reference>
<reference key="5">
    <citation type="journal article" date="2011" name="BMC Syst. Biol.">
        <title>Initial characterization of the human central proteome.</title>
        <authorList>
            <person name="Burkard T.R."/>
            <person name="Planyavsky M."/>
            <person name="Kaupe I."/>
            <person name="Breitwieser F.P."/>
            <person name="Buerckstuemmer T."/>
            <person name="Bennett K.L."/>
            <person name="Superti-Furga G."/>
            <person name="Colinge J."/>
        </authorList>
    </citation>
    <scope>IDENTIFICATION BY MASS SPECTROMETRY [LARGE SCALE ANALYSIS]</scope>
</reference>
<reference key="6">
    <citation type="journal article" date="2012" name="Proc. Natl. Acad. Sci. U.S.A.">
        <title>N-terminal acetylome analyses and functional insights of the N-terminal acetyltransferase NatB.</title>
        <authorList>
            <person name="Van Damme P."/>
            <person name="Lasa M."/>
            <person name="Polevoda B."/>
            <person name="Gazquez C."/>
            <person name="Elosegui-Artola A."/>
            <person name="Kim D.S."/>
            <person name="De Juan-Pardo E."/>
            <person name="Demeyer K."/>
            <person name="Hole K."/>
            <person name="Larrea E."/>
            <person name="Timmerman E."/>
            <person name="Prieto J."/>
            <person name="Arnesen T."/>
            <person name="Sherman F."/>
            <person name="Gevaert K."/>
            <person name="Aldabe R."/>
        </authorList>
    </citation>
    <scope>IDENTIFICATION BY MASS SPECTROMETRY [LARGE SCALE ANALYSIS]</scope>
</reference>
<reference key="7">
    <citation type="journal article" date="2017" name="J. Clin. Invest.">
        <title>Inherited GINS1 deficiency underlies growth retardation along with neutropenia and NK cell deficiency.</title>
        <authorList>
            <person name="Cottineau J."/>
            <person name="Kottemann M.C."/>
            <person name="Lach F.P."/>
            <person name="Kang Y.H."/>
            <person name="Vely F."/>
            <person name="Deenick E.K."/>
            <person name="Lazarov T."/>
            <person name="Gineau L."/>
            <person name="Wang Y."/>
            <person name="Farina A."/>
            <person name="Chansel M."/>
            <person name="Lorenzo L."/>
            <person name="Piperoglou C."/>
            <person name="Ma C.S."/>
            <person name="Nitschke P."/>
            <person name="Belkadi A."/>
            <person name="Itan Y."/>
            <person name="Boisson B."/>
            <person name="Jabot-Hanin F."/>
            <person name="Picard C."/>
            <person name="Bustamante J."/>
            <person name="Eidenschenk C."/>
            <person name="Boucherit S."/>
            <person name="Aladjidi N."/>
            <person name="Lacombe D."/>
            <person name="Barat P."/>
            <person name="Qasim W."/>
            <person name="Hurst J.A."/>
            <person name="Pollard A.J."/>
            <person name="Uhlig H.H."/>
            <person name="Fieschi C."/>
            <person name="Michon J."/>
            <person name="Bermudez V.P."/>
            <person name="Abel L."/>
            <person name="de Villartay J.P."/>
            <person name="Geissmann F."/>
            <person name="Tangye S.G."/>
            <person name="Hurwitz J."/>
            <person name="Vivier E."/>
            <person name="Casanova J.L."/>
            <person name="Smogorzewska A."/>
            <person name="Jouanguy E."/>
        </authorList>
    </citation>
    <scope>FUNCTION</scope>
    <scope>INTERACTION WITH GINS3 AND GINS4</scope>
    <scope>INVOLVEMENT IN IMD55</scope>
    <scope>VARIANTS IMD55 CYS-83 AND TYR-152</scope>
    <scope>CHARACTERIZATION OF VARIANTS IMD55 CYS-83 AND TYR-152</scope>
</reference>
<reference key="8">
    <citation type="journal article" date="2022" name="Nature">
        <title>Fast and efficient DNA replication with purified human proteins.</title>
        <authorList>
            <person name="Baris Y."/>
            <person name="Taylor M.R.G."/>
            <person name="Aria V."/>
            <person name="Yeeles J.T.P."/>
        </authorList>
    </citation>
    <scope>FUNCTION</scope>
    <scope>SUBCELLULAR LOCATION</scope>
</reference>
<reference key="9">
    <citation type="journal article" date="2007" name="EMBO Rep.">
        <title>Molecular architecture of the human GINS complex.</title>
        <authorList>
            <person name="Boskovic J."/>
            <person name="Coloma J."/>
            <person name="Aparicio T."/>
            <person name="Zhou M."/>
            <person name="Robinson C.V."/>
            <person name="Mendez J."/>
            <person name="Montoya G."/>
        </authorList>
    </citation>
    <scope>STRUCTURE BY ELECTRON MICROSCOPY (33 ANGSTROMS) IN COMPLEX WITH GINS2; GINS3 AND GINS4</scope>
    <scope>SUBUNIT</scope>
    <scope>MASS SPECTROMETRY OF GINS COMPLEX</scope>
</reference>
<reference key="10">
    <citation type="journal article" date="2007" name="Genes Dev.">
        <title>Crystal structure of the human GINS complex.</title>
        <authorList>
            <person name="Choi J.M."/>
            <person name="Lim H.S."/>
            <person name="Kim J.J."/>
            <person name="Song O.K."/>
            <person name="Cho Y."/>
        </authorList>
    </citation>
    <scope>X-RAY CRYSTALLOGRAPHY (3.0 ANGSTROMS) OF 1-151 IN COMPLEX WITH GINS2; GINS3 AND GINS4</scope>
    <scope>SUBUNIT</scope>
</reference>
<reference key="11">
    <citation type="journal article" date="2007" name="Nat. Struct. Mol. Biol.">
        <title>Structure of the human GINS complex and its assembly and functional interface in replication initiation.</title>
        <authorList>
            <person name="Kamada K."/>
            <person name="Kubota Y."/>
            <person name="Arata T."/>
            <person name="Shindo Y."/>
            <person name="Hanaoka F."/>
        </authorList>
    </citation>
    <scope>FUNCTION</scope>
    <scope>X-RAY CRYSTALLOGRAPHY (2.3 ANGSTROMS) OF 1-149 IN COMPLEX WITH GINS2; GINS3 AND GINS4</scope>
    <scope>SUBUNIT</scope>
</reference>
<reference key="12">
    <citation type="journal article" date="2007" name="Proc. Natl. Acad. Sci. U.S.A.">
        <title>Crystal structure of the GINS complex and functional insights into its role in DNA replication.</title>
        <authorList>
            <person name="Chang Y.P."/>
            <person name="Wang G."/>
            <person name="Bermudez V."/>
            <person name="Hurwitz J."/>
            <person name="Chen X.S."/>
        </authorList>
    </citation>
    <scope>X-RAY CRYSTALLOGRAPHY (2.36 ANGSTROMS) IN COMPLEX WITH GINS2; GINS3 AND GINS4</scope>
    <scope>SUBUNIT</scope>
    <scope>REGION</scope>
</reference>
<reference evidence="15 16" key="13">
    <citation type="journal article" date="2020" name="Nucleic Acids Res.">
        <title>CryoEM structures of human CMG-ATPgammaS-DNA and CMG-AND-1 complexes.</title>
        <authorList>
            <person name="Rzechorzek N.J."/>
            <person name="Hardwick S.W."/>
            <person name="Jatikusumo V.A."/>
            <person name="Chirgadze D.Y."/>
            <person name="Pellegrini L."/>
        </authorList>
    </citation>
    <scope>STRUCTURE BY ELECTRON MICROSCOPY (3.29 ANGSTROMS) IN CMG COMPLEX</scope>
    <scope>SUBUNIT</scope>
    <scope>FUNCTION</scope>
</reference>
<reference evidence="17" key="14">
    <citation type="journal article" date="2021" name="EMBO J.">
        <title>Structure of a human replisome shows the organisation and interactions of a DNA replication machine.</title>
        <authorList>
            <person name="Jones M.L."/>
            <person name="Baris Y."/>
            <person name="Taylor M.R.G."/>
            <person name="Yeeles J.T.P."/>
        </authorList>
    </citation>
    <scope>STRUCTURE BY ELECTRON MICROSCOPY (3.20 ANGSTROMS) IN REPLISOME</scope>
    <scope>SUBUNIT</scope>
    <scope>FUNCTION</scope>
</reference>
<reference evidence="18" key="15">
    <citation type="journal article" date="2021" name="Nature">
        <title>A conserved mechanism for regulating replisome disassembly in eukaryotes.</title>
        <authorList>
            <person name="Jenkyn-Bedford M."/>
            <person name="Jones M.L."/>
            <person name="Baris Y."/>
            <person name="Labib K.P.M."/>
            <person name="Cannone G."/>
            <person name="Yeeles J.T.P."/>
            <person name="Deegan T.D."/>
        </authorList>
    </citation>
    <scope>STRUCTURE BY ELECTRON MICROSCOPY (2.80 ANGSTROMS) IN REPLISOME</scope>
    <scope>SUBUNIT</scope>
    <scope>FUNCTION</scope>
</reference>
<protein>
    <recommendedName>
        <fullName>DNA replication complex GINS protein PSF1</fullName>
    </recommendedName>
    <alternativeName>
        <fullName>GINS complex subunit 1</fullName>
    </alternativeName>
</protein>
<evidence type="ECO:0000269" key="1">
    <source>
    </source>
</evidence>
<evidence type="ECO:0000269" key="2">
    <source>
    </source>
</evidence>
<evidence type="ECO:0000269" key="3">
    <source>
    </source>
</evidence>
<evidence type="ECO:0000269" key="4">
    <source>
    </source>
</evidence>
<evidence type="ECO:0000269" key="5">
    <source>
    </source>
</evidence>
<evidence type="ECO:0000269" key="6">
    <source>
    </source>
</evidence>
<evidence type="ECO:0000269" key="7">
    <source>
    </source>
</evidence>
<evidence type="ECO:0000269" key="8">
    <source>
    </source>
</evidence>
<evidence type="ECO:0000269" key="9">
    <source>
    </source>
</evidence>
<evidence type="ECO:0000269" key="10">
    <source>
    </source>
</evidence>
<evidence type="ECO:0000269" key="11">
    <source>
    </source>
</evidence>
<evidence type="ECO:0000305" key="12"/>
<evidence type="ECO:0000305" key="13">
    <source>
    </source>
</evidence>
<evidence type="ECO:0000312" key="14">
    <source>
        <dbReference type="HGNC" id="HGNC:28980"/>
    </source>
</evidence>
<evidence type="ECO:0007744" key="15">
    <source>
        <dbReference type="PDB" id="6XTX"/>
    </source>
</evidence>
<evidence type="ECO:0007744" key="16">
    <source>
        <dbReference type="PDB" id="6XTY"/>
    </source>
</evidence>
<evidence type="ECO:0007744" key="17">
    <source>
        <dbReference type="PDB" id="7PFO"/>
    </source>
</evidence>
<evidence type="ECO:0007744" key="18">
    <source>
        <dbReference type="PDB" id="7PLO"/>
    </source>
</evidence>
<evidence type="ECO:0007829" key="19">
    <source>
        <dbReference type="PDB" id="2E9X"/>
    </source>
</evidence>
<evidence type="ECO:0007829" key="20">
    <source>
        <dbReference type="PDB" id="2EHO"/>
    </source>
</evidence>
<gene>
    <name evidence="14" type="primary">GINS1</name>
    <name type="synonym">KIAA0186</name>
    <name type="synonym">PSF1</name>
</gene>
<accession>Q14691</accession>
<accession>Q9NQE2</accession>
<accession>Q9NQI7</accession>